<keyword id="KW-0002">3D-structure</keyword>
<keyword id="KW-0903">Direct protein sequencing</keyword>
<keyword id="KW-1015">Disulfide bond</keyword>
<keyword id="KW-0646">Protease inhibitor</keyword>
<keyword id="KW-0722">Serine protease inhibitor</keyword>
<name>ITC_ALOMA</name>
<evidence type="ECO:0000250" key="1"/>
<evidence type="ECO:0000255" key="2"/>
<evidence type="ECO:0000305" key="3"/>
<evidence type="ECO:0007829" key="4">
    <source>
        <dbReference type="PDB" id="5WVX"/>
    </source>
</evidence>
<evidence type="ECO:0007829" key="5">
    <source>
        <dbReference type="PDB" id="5YCZ"/>
    </source>
</evidence>
<protein>
    <recommendedName>
        <fullName>Trypsin/chymotrypsin inhibitor</fullName>
    </recommendedName>
</protein>
<reference key="1">
    <citation type="journal article" date="1994" name="Biochim. Biophys. Acta">
        <title>Amino-acid sequence of a trypsin/chymotrypsin inhibitor from giant taro (Alocasia macrorrhiza).</title>
        <authorList>
            <person name="Argall M.E."/>
            <person name="Brandbury H.J."/>
            <person name="Shaw D.C."/>
        </authorList>
    </citation>
    <scope>PROTEIN SEQUENCE</scope>
    <source>
        <strain>cv. Fui-1</strain>
    </source>
</reference>
<dbReference type="PDB" id="5WVX">
    <property type="method" value="X-ray"/>
    <property type="resolution" value="3.00 A"/>
    <property type="chains" value="A/B=1-184"/>
</dbReference>
<dbReference type="PDB" id="5YCZ">
    <property type="method" value="X-ray"/>
    <property type="resolution" value="2.50 A"/>
    <property type="chains" value="A/B=1-184"/>
</dbReference>
<dbReference type="PDBsum" id="5WVX"/>
<dbReference type="PDBsum" id="5YCZ"/>
<dbReference type="SMR" id="P35812"/>
<dbReference type="MEROPS" id="I03.003"/>
<dbReference type="GO" id="GO:0004867">
    <property type="term" value="F:serine-type endopeptidase inhibitor activity"/>
    <property type="evidence" value="ECO:0007669"/>
    <property type="project" value="UniProtKB-KW"/>
</dbReference>
<dbReference type="CDD" id="cd23378">
    <property type="entry name" value="beta-trefoil_STI_AMTIN"/>
    <property type="match status" value="1"/>
</dbReference>
<dbReference type="Gene3D" id="2.80.10.50">
    <property type="match status" value="1"/>
</dbReference>
<dbReference type="InterPro" id="IPR011065">
    <property type="entry name" value="Kunitz_inhibitor_STI-like_sf"/>
</dbReference>
<dbReference type="InterPro" id="IPR016308">
    <property type="entry name" value="Prot_inh_API-A/B"/>
</dbReference>
<dbReference type="InterPro" id="IPR002160">
    <property type="entry name" value="Prot_inh_Kunz-lg"/>
</dbReference>
<dbReference type="PANTHER" id="PTHR33107">
    <property type="entry name" value="KUNITZ TRYPSIN INHIBITOR 2"/>
    <property type="match status" value="1"/>
</dbReference>
<dbReference type="PANTHER" id="PTHR33107:SF81">
    <property type="entry name" value="TRYPSIN INHIBITOR A"/>
    <property type="match status" value="1"/>
</dbReference>
<dbReference type="Pfam" id="PF00197">
    <property type="entry name" value="Kunitz_legume"/>
    <property type="match status" value="1"/>
</dbReference>
<dbReference type="PIRSF" id="PIRSF001653">
    <property type="entry name" value="API-B"/>
    <property type="match status" value="1"/>
</dbReference>
<dbReference type="SMART" id="SM00452">
    <property type="entry name" value="STI"/>
    <property type="match status" value="1"/>
</dbReference>
<dbReference type="SUPFAM" id="SSF50386">
    <property type="entry name" value="STI-like"/>
    <property type="match status" value="1"/>
</dbReference>
<comment type="function">
    <text>Inhibits trypsin and alpha-chymotrypsin.</text>
</comment>
<comment type="subunit">
    <text>Homodimer.</text>
</comment>
<comment type="similarity">
    <text evidence="3">Belongs to the protease inhibitor I3 (leguminous Kunitz-type inhibitor) family.</text>
</comment>
<proteinExistence type="evidence at protein level"/>
<sequence>TNPVLDVDGNELQRGQLYYATSVMRPGGGLTLAAPKGSCPLNVAQAPFDEYSGRPLAFFPENADDDTVQEGSTLYIMFPEPTRCPQSTVWTFDREAGFVTTGGTTSKAIGPHNSRFAIRKAGDASSQPRDYQIEVCPCSTGVERPSCRMGCLGTLGLAEGGKNVLLNINNESPHTIRFVKVKEG</sequence>
<organism>
    <name type="scientific">Alocasia macrorrhizos</name>
    <name type="common">Giant taro</name>
    <name type="synonym">Arum macrorrhizon</name>
    <dbReference type="NCBI Taxonomy" id="4456"/>
    <lineage>
        <taxon>Eukaryota</taxon>
        <taxon>Viridiplantae</taxon>
        <taxon>Streptophyta</taxon>
        <taxon>Embryophyta</taxon>
        <taxon>Tracheophyta</taxon>
        <taxon>Spermatophyta</taxon>
        <taxon>Magnoliopsida</taxon>
        <taxon>Liliopsida</taxon>
        <taxon>Araceae</taxon>
        <taxon>Aroideae</taxon>
        <taxon>Colocasieae</taxon>
        <taxon>Alocasia</taxon>
    </lineage>
</organism>
<feature type="chain" id="PRO_0000083307" description="Trypsin/chymotrypsin inhibitor">
    <location>
        <begin position="1"/>
        <end position="184"/>
    </location>
</feature>
<feature type="site" description="Reactive bond" evidence="2">
    <location>
        <begin position="56"/>
        <end position="57"/>
    </location>
</feature>
<feature type="disulfide bond" evidence="1">
    <location>
        <begin position="39"/>
        <end position="84"/>
    </location>
</feature>
<feature type="disulfide bond" evidence="1">
    <location>
        <begin position="136"/>
        <end position="147"/>
    </location>
</feature>
<feature type="sequence variant" description="In 50% of the molecules.">
    <original>M</original>
    <variation>A</variation>
    <location>
        <position position="24"/>
    </location>
</feature>
<feature type="sequence variant" description="In 25% of the molecules.">
    <original>E</original>
    <variation>K</variation>
    <location>
        <position position="50"/>
    </location>
</feature>
<feature type="strand" evidence="5">
    <location>
        <begin position="13"/>
        <end position="15"/>
    </location>
</feature>
<feature type="strand" evidence="5">
    <location>
        <begin position="18"/>
        <end position="27"/>
    </location>
</feature>
<feature type="strand" evidence="5">
    <location>
        <begin position="30"/>
        <end position="33"/>
    </location>
</feature>
<feature type="strand" evidence="5">
    <location>
        <begin position="42"/>
        <end position="45"/>
    </location>
</feature>
<feature type="strand" evidence="4">
    <location>
        <begin position="48"/>
        <end position="50"/>
    </location>
</feature>
<feature type="strand" evidence="5">
    <location>
        <begin position="54"/>
        <end position="62"/>
    </location>
</feature>
<feature type="strand" evidence="4">
    <location>
        <begin position="67"/>
        <end position="69"/>
    </location>
</feature>
<feature type="strand" evidence="5">
    <location>
        <begin position="74"/>
        <end position="77"/>
    </location>
</feature>
<feature type="strand" evidence="5">
    <location>
        <begin position="83"/>
        <end position="86"/>
    </location>
</feature>
<feature type="strand" evidence="5">
    <location>
        <begin position="91"/>
        <end position="93"/>
    </location>
</feature>
<feature type="turn" evidence="5">
    <location>
        <begin position="94"/>
        <end position="97"/>
    </location>
</feature>
<feature type="strand" evidence="5">
    <location>
        <begin position="98"/>
        <end position="101"/>
    </location>
</feature>
<feature type="strand" evidence="4">
    <location>
        <begin position="103"/>
        <end position="105"/>
    </location>
</feature>
<feature type="strand" evidence="5">
    <location>
        <begin position="108"/>
        <end position="110"/>
    </location>
</feature>
<feature type="strand" evidence="4">
    <location>
        <begin position="112"/>
        <end position="114"/>
    </location>
</feature>
<feature type="strand" evidence="5">
    <location>
        <begin position="116"/>
        <end position="120"/>
    </location>
</feature>
<feature type="strand" evidence="4">
    <location>
        <begin position="122"/>
        <end position="124"/>
    </location>
</feature>
<feature type="strand" evidence="5">
    <location>
        <begin position="131"/>
        <end position="135"/>
    </location>
</feature>
<feature type="turn" evidence="4">
    <location>
        <begin position="138"/>
        <end position="141"/>
    </location>
</feature>
<feature type="strand" evidence="5">
    <location>
        <begin position="153"/>
        <end position="159"/>
    </location>
</feature>
<feature type="strand" evidence="5">
    <location>
        <begin position="161"/>
        <end position="168"/>
    </location>
</feature>
<feature type="strand" evidence="5">
    <location>
        <begin position="170"/>
        <end position="172"/>
    </location>
</feature>
<feature type="strand" evidence="5">
    <location>
        <begin position="176"/>
        <end position="180"/>
    </location>
</feature>
<accession>P35812</accession>